<protein>
    <recommendedName>
        <fullName evidence="1">UPF0342 protein BCG9842_B4422</fullName>
    </recommendedName>
</protein>
<organism>
    <name type="scientific">Bacillus cereus (strain G9842)</name>
    <dbReference type="NCBI Taxonomy" id="405531"/>
    <lineage>
        <taxon>Bacteria</taxon>
        <taxon>Bacillati</taxon>
        <taxon>Bacillota</taxon>
        <taxon>Bacilli</taxon>
        <taxon>Bacillales</taxon>
        <taxon>Bacillaceae</taxon>
        <taxon>Bacillus</taxon>
        <taxon>Bacillus cereus group</taxon>
    </lineage>
</organism>
<comment type="similarity">
    <text evidence="1">Belongs to the UPF0342 family.</text>
</comment>
<name>Y4422_BACC2</name>
<accession>B7IIB8</accession>
<gene>
    <name type="ordered locus">BCG9842_B4422</name>
</gene>
<reference key="1">
    <citation type="submission" date="2008-10" db="EMBL/GenBank/DDBJ databases">
        <title>Genome sequence of Bacillus cereus G9842.</title>
        <authorList>
            <person name="Dodson R.J."/>
            <person name="Durkin A.S."/>
            <person name="Rosovitz M.J."/>
            <person name="Rasko D.A."/>
            <person name="Hoffmaster A."/>
            <person name="Ravel J."/>
            <person name="Sutton G."/>
        </authorList>
    </citation>
    <scope>NUCLEOTIDE SEQUENCE [LARGE SCALE GENOMIC DNA]</scope>
    <source>
        <strain>G9842</strain>
    </source>
</reference>
<sequence>MTKNIHDVAYELQKAIAENEDFKTLKESYAAVQADAASKNLFDEFRTMQLSLQQKMMQGQEITEEDNQQAQEVVARIQQDAKITKLMETEQRLNVVIGDVNKIIMKPLEELYSAQQQA</sequence>
<evidence type="ECO:0000255" key="1">
    <source>
        <dbReference type="HAMAP-Rule" id="MF_01526"/>
    </source>
</evidence>
<dbReference type="EMBL" id="CP001186">
    <property type="protein sequence ID" value="ACK95137.1"/>
    <property type="molecule type" value="Genomic_DNA"/>
</dbReference>
<dbReference type="RefSeq" id="WP_000164612.1">
    <property type="nucleotide sequence ID" value="NC_011772.1"/>
</dbReference>
<dbReference type="SMR" id="B7IIB8"/>
<dbReference type="KEGG" id="bcg:BCG9842_B4422"/>
<dbReference type="HOGENOM" id="CLU_140243_3_0_9"/>
<dbReference type="Proteomes" id="UP000006744">
    <property type="component" value="Chromosome"/>
</dbReference>
<dbReference type="Gene3D" id="1.20.1500.10">
    <property type="entry name" value="YheA/YmcA-like"/>
    <property type="match status" value="1"/>
</dbReference>
<dbReference type="HAMAP" id="MF_01526">
    <property type="entry name" value="UPF0342"/>
    <property type="match status" value="1"/>
</dbReference>
<dbReference type="InterPro" id="IPR010368">
    <property type="entry name" value="Com_YlbF"/>
</dbReference>
<dbReference type="InterPro" id="IPR023378">
    <property type="entry name" value="YheA/YmcA-like_dom_sf"/>
</dbReference>
<dbReference type="NCBIfam" id="NF010211">
    <property type="entry name" value="PRK13676.1-4"/>
    <property type="match status" value="1"/>
</dbReference>
<dbReference type="Pfam" id="PF06133">
    <property type="entry name" value="Com_YlbF"/>
    <property type="match status" value="1"/>
</dbReference>
<dbReference type="SUPFAM" id="SSF158622">
    <property type="entry name" value="YheA/YmcA-like"/>
    <property type="match status" value="1"/>
</dbReference>
<feature type="chain" id="PRO_1000198521" description="UPF0342 protein BCG9842_B4422">
    <location>
        <begin position="1"/>
        <end position="118"/>
    </location>
</feature>
<proteinExistence type="inferred from homology"/>